<name>Y3539_VIBCH</name>
<keyword id="KW-1185">Reference proteome</keyword>
<protein>
    <recommendedName>
        <fullName>UPF0213 protein VC_A0739</fullName>
    </recommendedName>
</protein>
<organism>
    <name type="scientific">Vibrio cholerae serotype O1 (strain ATCC 39315 / El Tor Inaba N16961)</name>
    <dbReference type="NCBI Taxonomy" id="243277"/>
    <lineage>
        <taxon>Bacteria</taxon>
        <taxon>Pseudomonadati</taxon>
        <taxon>Pseudomonadota</taxon>
        <taxon>Gammaproteobacteria</taxon>
        <taxon>Vibrionales</taxon>
        <taxon>Vibrionaceae</taxon>
        <taxon>Vibrio</taxon>
    </lineage>
</organism>
<dbReference type="EMBL" id="AE003853">
    <property type="protein sequence ID" value="AAF96638.1"/>
    <property type="molecule type" value="Genomic_DNA"/>
</dbReference>
<dbReference type="PIR" id="F82421">
    <property type="entry name" value="F82421"/>
</dbReference>
<dbReference type="RefSeq" id="NP_233126.1">
    <property type="nucleotide sequence ID" value="NC_002506.1"/>
</dbReference>
<dbReference type="RefSeq" id="WP_000429067.1">
    <property type="nucleotide sequence ID" value="NZ_LT906615.1"/>
</dbReference>
<dbReference type="SMR" id="Q9KLK4"/>
<dbReference type="STRING" id="243277.VC_A0739"/>
<dbReference type="DNASU" id="2611926"/>
<dbReference type="EnsemblBacteria" id="AAF96638">
    <property type="protein sequence ID" value="AAF96638"/>
    <property type="gene ID" value="VC_A0739"/>
</dbReference>
<dbReference type="KEGG" id="vch:VC_A0739"/>
<dbReference type="PATRIC" id="fig|243277.26.peg.3362"/>
<dbReference type="eggNOG" id="COG2827">
    <property type="taxonomic scope" value="Bacteria"/>
</dbReference>
<dbReference type="HOGENOM" id="CLU_135650_0_1_6"/>
<dbReference type="Proteomes" id="UP000000584">
    <property type="component" value="Chromosome 2"/>
</dbReference>
<dbReference type="CDD" id="cd10456">
    <property type="entry name" value="GIY-YIG_UPF0213"/>
    <property type="match status" value="1"/>
</dbReference>
<dbReference type="Gene3D" id="3.40.1440.10">
    <property type="entry name" value="GIY-YIG endonuclease"/>
    <property type="match status" value="1"/>
</dbReference>
<dbReference type="InterPro" id="IPR000305">
    <property type="entry name" value="GIY-YIG_endonuc"/>
</dbReference>
<dbReference type="InterPro" id="IPR035901">
    <property type="entry name" value="GIY-YIG_endonuc_sf"/>
</dbReference>
<dbReference type="InterPro" id="IPR050190">
    <property type="entry name" value="UPF0213_domain"/>
</dbReference>
<dbReference type="PANTHER" id="PTHR34477">
    <property type="entry name" value="UPF0213 PROTEIN YHBQ"/>
    <property type="match status" value="1"/>
</dbReference>
<dbReference type="PANTHER" id="PTHR34477:SF1">
    <property type="entry name" value="UPF0213 PROTEIN YHBQ"/>
    <property type="match status" value="1"/>
</dbReference>
<dbReference type="Pfam" id="PF01541">
    <property type="entry name" value="GIY-YIG"/>
    <property type="match status" value="1"/>
</dbReference>
<dbReference type="SUPFAM" id="SSF82771">
    <property type="entry name" value="GIY-YIG endonuclease"/>
    <property type="match status" value="1"/>
</dbReference>
<dbReference type="PROSITE" id="PS50164">
    <property type="entry name" value="GIY_YIG"/>
    <property type="match status" value="1"/>
</dbReference>
<comment type="similarity">
    <text evidence="2">Belongs to the UPF0213 family.</text>
</comment>
<feature type="chain" id="PRO_0000161398" description="UPF0213 protein VC_A0739">
    <location>
        <begin position="1"/>
        <end position="101"/>
    </location>
</feature>
<feature type="domain" description="GIY-YIG" evidence="1">
    <location>
        <begin position="9"/>
        <end position="85"/>
    </location>
</feature>
<gene>
    <name type="ordered locus">VC_A0739</name>
</gene>
<proteinExistence type="inferred from homology"/>
<accession>Q9KLK4</accession>
<evidence type="ECO:0000255" key="1">
    <source>
        <dbReference type="PROSITE-ProRule" id="PRU00977"/>
    </source>
</evidence>
<evidence type="ECO:0000305" key="2"/>
<reference key="1">
    <citation type="journal article" date="2000" name="Nature">
        <title>DNA sequence of both chromosomes of the cholera pathogen Vibrio cholerae.</title>
        <authorList>
            <person name="Heidelberg J.F."/>
            <person name="Eisen J.A."/>
            <person name="Nelson W.C."/>
            <person name="Clayton R.A."/>
            <person name="Gwinn M.L."/>
            <person name="Dodson R.J."/>
            <person name="Haft D.H."/>
            <person name="Hickey E.K."/>
            <person name="Peterson J.D."/>
            <person name="Umayam L.A."/>
            <person name="Gill S.R."/>
            <person name="Nelson K.E."/>
            <person name="Read T.D."/>
            <person name="Tettelin H."/>
            <person name="Richardson D.L."/>
            <person name="Ermolaeva M.D."/>
            <person name="Vamathevan J.J."/>
            <person name="Bass S."/>
            <person name="Qin H."/>
            <person name="Dragoi I."/>
            <person name="Sellers P."/>
            <person name="McDonald L.A."/>
            <person name="Utterback T.R."/>
            <person name="Fleischmann R.D."/>
            <person name="Nierman W.C."/>
            <person name="White O."/>
            <person name="Salzberg S.L."/>
            <person name="Smith H.O."/>
            <person name="Colwell R.R."/>
            <person name="Mekalanos J.J."/>
            <person name="Venter J.C."/>
            <person name="Fraser C.M."/>
        </authorList>
    </citation>
    <scope>NUCLEOTIDE SEQUENCE [LARGE SCALE GENOMIC DNA]</scope>
    <source>
        <strain>ATCC 39315 / El Tor Inaba N16961</strain>
    </source>
</reference>
<sequence>MENLAELPSPWFVYLVRCANNALYCGITTDVSRRFAQHQKGRGAKALRGKGPLELVWSLPVADGKSAALKLEYRIKALSKSQKEALVAGMARIDQLEIIFQ</sequence>